<protein>
    <recommendedName>
        <fullName>Dihydroorotate dehydrogenase B (NAD(+)), catalytic subunit</fullName>
        <shortName>DHOD B</shortName>
        <shortName>DHODase B</shortName>
        <shortName>DHOdehase B</shortName>
        <ecNumber>1.3.1.14</ecNumber>
    </recommendedName>
    <alternativeName>
        <fullName>Dihydroorotate oxidase B</fullName>
    </alternativeName>
    <alternativeName>
        <fullName>Orotate reductase (NADH)</fullName>
    </alternativeName>
</protein>
<organism>
    <name type="scientific">Alkaliphilus metalliredigens (strain QYMF)</name>
    <dbReference type="NCBI Taxonomy" id="293826"/>
    <lineage>
        <taxon>Bacteria</taxon>
        <taxon>Bacillati</taxon>
        <taxon>Bacillota</taxon>
        <taxon>Clostridia</taxon>
        <taxon>Peptostreptococcales</taxon>
        <taxon>Natronincolaceae</taxon>
        <taxon>Alkaliphilus</taxon>
    </lineage>
</organism>
<feature type="chain" id="PRO_0000336441" description="Dihydroorotate dehydrogenase B (NAD(+)), catalytic subunit">
    <location>
        <begin position="1"/>
        <end position="302"/>
    </location>
</feature>
<feature type="active site" description="Nucleophile">
    <location>
        <position position="131"/>
    </location>
</feature>
<feature type="binding site" evidence="1">
    <location>
        <position position="23"/>
    </location>
    <ligand>
        <name>FMN</name>
        <dbReference type="ChEBI" id="CHEBI:58210"/>
    </ligand>
</feature>
<feature type="binding site" evidence="1">
    <location>
        <begin position="47"/>
        <end position="48"/>
    </location>
    <ligand>
        <name>FMN</name>
        <dbReference type="ChEBI" id="CHEBI:58210"/>
    </ligand>
</feature>
<feature type="binding site" evidence="1">
    <location>
        <position position="47"/>
    </location>
    <ligand>
        <name>substrate</name>
    </ligand>
</feature>
<feature type="binding site" evidence="1">
    <location>
        <begin position="71"/>
        <end position="75"/>
    </location>
    <ligand>
        <name>substrate</name>
    </ligand>
</feature>
<feature type="binding site" evidence="1">
    <location>
        <position position="101"/>
    </location>
    <ligand>
        <name>FMN</name>
        <dbReference type="ChEBI" id="CHEBI:58210"/>
    </ligand>
</feature>
<feature type="binding site" evidence="1">
    <location>
        <position position="128"/>
    </location>
    <ligand>
        <name>FMN</name>
        <dbReference type="ChEBI" id="CHEBI:58210"/>
    </ligand>
</feature>
<feature type="binding site" evidence="1">
    <location>
        <position position="128"/>
    </location>
    <ligand>
        <name>substrate</name>
    </ligand>
</feature>
<feature type="binding site" evidence="1">
    <location>
        <position position="166"/>
    </location>
    <ligand>
        <name>FMN</name>
        <dbReference type="ChEBI" id="CHEBI:58210"/>
    </ligand>
</feature>
<feature type="binding site" evidence="1">
    <location>
        <position position="192"/>
    </location>
    <ligand>
        <name>FMN</name>
        <dbReference type="ChEBI" id="CHEBI:58210"/>
    </ligand>
</feature>
<feature type="binding site" evidence="1">
    <location>
        <begin position="193"/>
        <end position="194"/>
    </location>
    <ligand>
        <name>substrate</name>
    </ligand>
</feature>
<feature type="binding site" evidence="1">
    <location>
        <position position="218"/>
    </location>
    <ligand>
        <name>FMN</name>
        <dbReference type="ChEBI" id="CHEBI:58210"/>
    </ligand>
</feature>
<feature type="binding site" evidence="1">
    <location>
        <begin position="244"/>
        <end position="245"/>
    </location>
    <ligand>
        <name>FMN</name>
        <dbReference type="ChEBI" id="CHEBI:58210"/>
    </ligand>
</feature>
<feature type="binding site" evidence="1">
    <location>
        <begin position="266"/>
        <end position="267"/>
    </location>
    <ligand>
        <name>FMN</name>
        <dbReference type="ChEBI" id="CHEBI:58210"/>
    </ligand>
</feature>
<comment type="function">
    <text evidence="1">Catalyzes the conversion of dihydroorotate to orotate with NAD(+) as electron acceptor.</text>
</comment>
<comment type="catalytic activity">
    <reaction>
        <text>(S)-dihydroorotate + NAD(+) = orotate + NADH + H(+)</text>
        <dbReference type="Rhea" id="RHEA:13513"/>
        <dbReference type="ChEBI" id="CHEBI:15378"/>
        <dbReference type="ChEBI" id="CHEBI:30839"/>
        <dbReference type="ChEBI" id="CHEBI:30864"/>
        <dbReference type="ChEBI" id="CHEBI:57540"/>
        <dbReference type="ChEBI" id="CHEBI:57945"/>
        <dbReference type="EC" id="1.3.1.14"/>
    </reaction>
</comment>
<comment type="cofactor">
    <cofactor evidence="1">
        <name>FMN</name>
        <dbReference type="ChEBI" id="CHEBI:58210"/>
    </cofactor>
    <text evidence="1">Binds 1 FMN per subunit.</text>
</comment>
<comment type="pathway">
    <text>Pyrimidine metabolism; UMP biosynthesis via de novo pathway; orotate from (S)-dihydroorotate (NAD(+) route): step 1/1.</text>
</comment>
<comment type="subunit">
    <text evidence="1">Heterotetramer of 2 PyrK and 2 PyrD type B subunits.</text>
</comment>
<comment type="subcellular location">
    <subcellularLocation>
        <location evidence="1">Cytoplasm</location>
    </subcellularLocation>
</comment>
<comment type="similarity">
    <text evidence="2">Belongs to the dihydroorotate dehydrogenase family. Type 1 subfamily.</text>
</comment>
<sequence>MTKVNMKVNIAGVELKNPVMTASGTFGSGREYGEYVDLNQLGAVVVKGVANEPWKGNPSPRIAETYGGMLNSVGLQNPGVDEFIEKDIPFLRQYNTKIIVNIAGRTIEDYCEVVKKLGDADVDLLELNISCPNVKAGGVCFGTDPFMVEEVTKAVKKVAKQPLIVKLTPNVTDIVPIAKAAVAGGADGISLINTLLGMAIDIHKRKPILANVMGGFSGPAIKPVALRMVYQVANAVDVPIIGMGGIMTGEDAVEFILAGASGVAVGTANFINPRATIDVIEGIQGYMEQYSIKDLKEIRGSL</sequence>
<reference key="1">
    <citation type="journal article" date="2016" name="Genome Announc.">
        <title>Complete genome sequence of Alkaliphilus metalliredigens strain QYMF, an alkaliphilic and metal-reducing bacterium isolated from borax-contaminated leachate ponds.</title>
        <authorList>
            <person name="Hwang C."/>
            <person name="Copeland A."/>
            <person name="Lucas S."/>
            <person name="Lapidus A."/>
            <person name="Barry K."/>
            <person name="Detter J.C."/>
            <person name="Glavina Del Rio T."/>
            <person name="Hammon N."/>
            <person name="Israni S."/>
            <person name="Dalin E."/>
            <person name="Tice H."/>
            <person name="Pitluck S."/>
            <person name="Chertkov O."/>
            <person name="Brettin T."/>
            <person name="Bruce D."/>
            <person name="Han C."/>
            <person name="Schmutz J."/>
            <person name="Larimer F."/>
            <person name="Land M.L."/>
            <person name="Hauser L."/>
            <person name="Kyrpides N."/>
            <person name="Mikhailova N."/>
            <person name="Ye Q."/>
            <person name="Zhou J."/>
            <person name="Richardson P."/>
            <person name="Fields M.W."/>
        </authorList>
    </citation>
    <scope>NUCLEOTIDE SEQUENCE [LARGE SCALE GENOMIC DNA]</scope>
    <source>
        <strain>QYMF</strain>
    </source>
</reference>
<dbReference type="EC" id="1.3.1.14"/>
<dbReference type="EMBL" id="CP000724">
    <property type="protein sequence ID" value="ABR50288.1"/>
    <property type="molecule type" value="Genomic_DNA"/>
</dbReference>
<dbReference type="RefSeq" id="WP_012065236.1">
    <property type="nucleotide sequence ID" value="NC_009633.1"/>
</dbReference>
<dbReference type="SMR" id="A6TVS0"/>
<dbReference type="STRING" id="293826.Amet_4208"/>
<dbReference type="KEGG" id="amt:Amet_4208"/>
<dbReference type="eggNOG" id="COG0167">
    <property type="taxonomic scope" value="Bacteria"/>
</dbReference>
<dbReference type="HOGENOM" id="CLU_042042_0_0_9"/>
<dbReference type="UniPathway" id="UPA00070">
    <property type="reaction ID" value="UER00945"/>
</dbReference>
<dbReference type="Proteomes" id="UP000001572">
    <property type="component" value="Chromosome"/>
</dbReference>
<dbReference type="GO" id="GO:0005737">
    <property type="term" value="C:cytoplasm"/>
    <property type="evidence" value="ECO:0007669"/>
    <property type="project" value="UniProtKB-SubCell"/>
</dbReference>
<dbReference type="GO" id="GO:0004589">
    <property type="term" value="F:dihydroorotate dehydrogenase (NAD+) activity"/>
    <property type="evidence" value="ECO:0007669"/>
    <property type="project" value="UniProtKB-EC"/>
</dbReference>
<dbReference type="GO" id="GO:0006207">
    <property type="term" value="P:'de novo' pyrimidine nucleobase biosynthetic process"/>
    <property type="evidence" value="ECO:0007669"/>
    <property type="project" value="InterPro"/>
</dbReference>
<dbReference type="GO" id="GO:0044205">
    <property type="term" value="P:'de novo' UMP biosynthetic process"/>
    <property type="evidence" value="ECO:0007669"/>
    <property type="project" value="UniProtKB-UniRule"/>
</dbReference>
<dbReference type="CDD" id="cd04740">
    <property type="entry name" value="DHOD_1B_like"/>
    <property type="match status" value="1"/>
</dbReference>
<dbReference type="FunFam" id="3.20.20.70:FF:000027">
    <property type="entry name" value="Dihydropyrimidine dehydrogenase [NADP(+)]"/>
    <property type="match status" value="1"/>
</dbReference>
<dbReference type="Gene3D" id="3.20.20.70">
    <property type="entry name" value="Aldolase class I"/>
    <property type="match status" value="1"/>
</dbReference>
<dbReference type="HAMAP" id="MF_00224">
    <property type="entry name" value="DHO_dh_type1"/>
    <property type="match status" value="1"/>
</dbReference>
<dbReference type="InterPro" id="IPR013785">
    <property type="entry name" value="Aldolase_TIM"/>
</dbReference>
<dbReference type="InterPro" id="IPR050074">
    <property type="entry name" value="DHO_dehydrogenase"/>
</dbReference>
<dbReference type="InterPro" id="IPR033888">
    <property type="entry name" value="DHOD_1B"/>
</dbReference>
<dbReference type="InterPro" id="IPR024920">
    <property type="entry name" value="Dihydroorotate_DH_1"/>
</dbReference>
<dbReference type="InterPro" id="IPR012135">
    <property type="entry name" value="Dihydroorotate_DH_1_2"/>
</dbReference>
<dbReference type="InterPro" id="IPR005720">
    <property type="entry name" value="Dihydroorotate_DH_cat"/>
</dbReference>
<dbReference type="InterPro" id="IPR001295">
    <property type="entry name" value="Dihydroorotate_DH_CS"/>
</dbReference>
<dbReference type="InterPro" id="IPR049622">
    <property type="entry name" value="Dihydroorotate_DH_I"/>
</dbReference>
<dbReference type="NCBIfam" id="NF005574">
    <property type="entry name" value="PRK07259.1"/>
    <property type="match status" value="1"/>
</dbReference>
<dbReference type="NCBIfam" id="TIGR01037">
    <property type="entry name" value="pyrD_sub1_fam"/>
    <property type="match status" value="1"/>
</dbReference>
<dbReference type="PANTHER" id="PTHR48109:SF1">
    <property type="entry name" value="DIHYDROOROTATE DEHYDROGENASE (FUMARATE)"/>
    <property type="match status" value="1"/>
</dbReference>
<dbReference type="PANTHER" id="PTHR48109">
    <property type="entry name" value="DIHYDROOROTATE DEHYDROGENASE (QUINONE), MITOCHONDRIAL-RELATED"/>
    <property type="match status" value="1"/>
</dbReference>
<dbReference type="Pfam" id="PF01180">
    <property type="entry name" value="DHO_dh"/>
    <property type="match status" value="1"/>
</dbReference>
<dbReference type="PIRSF" id="PIRSF000164">
    <property type="entry name" value="DHO_oxidase"/>
    <property type="match status" value="1"/>
</dbReference>
<dbReference type="SUPFAM" id="SSF51395">
    <property type="entry name" value="FMN-linked oxidoreductases"/>
    <property type="match status" value="1"/>
</dbReference>
<dbReference type="PROSITE" id="PS00912">
    <property type="entry name" value="DHODEHASE_2"/>
    <property type="match status" value="1"/>
</dbReference>
<keyword id="KW-0963">Cytoplasm</keyword>
<keyword id="KW-0285">Flavoprotein</keyword>
<keyword id="KW-0288">FMN</keyword>
<keyword id="KW-0520">NAD</keyword>
<keyword id="KW-0560">Oxidoreductase</keyword>
<keyword id="KW-0665">Pyrimidine biosynthesis</keyword>
<keyword id="KW-1185">Reference proteome</keyword>
<accession>A6TVS0</accession>
<proteinExistence type="inferred from homology"/>
<evidence type="ECO:0000250" key="1"/>
<evidence type="ECO:0000305" key="2"/>
<name>PYRDB_ALKMQ</name>
<gene>
    <name type="primary">pyrD</name>
    <name type="ordered locus">Amet_4208</name>
</gene>